<dbReference type="EMBL" id="ACYE01000205">
    <property type="protein sequence ID" value="EFE41209.1"/>
    <property type="molecule type" value="Genomic_DNA"/>
</dbReference>
<dbReference type="RefSeq" id="XP_003021827.1">
    <property type="nucleotide sequence ID" value="XM_003021781.1"/>
</dbReference>
<dbReference type="SMR" id="D4DA58"/>
<dbReference type="GeneID" id="9578707"/>
<dbReference type="KEGG" id="tve:TRV_04002"/>
<dbReference type="HOGENOM" id="CLU_043316_1_0_1"/>
<dbReference type="OrthoDB" id="2005at34384"/>
<dbReference type="Proteomes" id="UP000008383">
    <property type="component" value="Unassembled WGS sequence"/>
</dbReference>
<dbReference type="GO" id="GO:0005886">
    <property type="term" value="C:plasma membrane"/>
    <property type="evidence" value="ECO:0007669"/>
    <property type="project" value="UniProtKB-SubCell"/>
</dbReference>
<dbReference type="CDD" id="cd11855">
    <property type="entry name" value="SH3_Sho1p"/>
    <property type="match status" value="1"/>
</dbReference>
<dbReference type="FunFam" id="2.30.30.40:FF:000213">
    <property type="entry name" value="High osmolarity signaling protein SHO1"/>
    <property type="match status" value="1"/>
</dbReference>
<dbReference type="Gene3D" id="2.30.30.40">
    <property type="entry name" value="SH3 Domains"/>
    <property type="match status" value="1"/>
</dbReference>
<dbReference type="InterPro" id="IPR036028">
    <property type="entry name" value="SH3-like_dom_sf"/>
</dbReference>
<dbReference type="InterPro" id="IPR001452">
    <property type="entry name" value="SH3_domain"/>
</dbReference>
<dbReference type="InterPro" id="IPR035522">
    <property type="entry name" value="Sho1_SH3"/>
</dbReference>
<dbReference type="Pfam" id="PF00018">
    <property type="entry name" value="SH3_1"/>
    <property type="match status" value="1"/>
</dbReference>
<dbReference type="PRINTS" id="PR00452">
    <property type="entry name" value="SH3DOMAIN"/>
</dbReference>
<dbReference type="SMART" id="SM00326">
    <property type="entry name" value="SH3"/>
    <property type="match status" value="1"/>
</dbReference>
<dbReference type="SUPFAM" id="SSF50044">
    <property type="entry name" value="SH3-domain"/>
    <property type="match status" value="1"/>
</dbReference>
<dbReference type="PROSITE" id="PS50002">
    <property type="entry name" value="SH3"/>
    <property type="match status" value="1"/>
</dbReference>
<accession>D4DA58</accession>
<name>SHO1_TRIVH</name>
<reference key="1">
    <citation type="journal article" date="2011" name="Genome Biol.">
        <title>Comparative and functional genomics provide insights into the pathogenicity of dermatophytic fungi.</title>
        <authorList>
            <person name="Burmester A."/>
            <person name="Shelest E."/>
            <person name="Gloeckner G."/>
            <person name="Heddergott C."/>
            <person name="Schindler S."/>
            <person name="Staib P."/>
            <person name="Heidel A."/>
            <person name="Felder M."/>
            <person name="Petzold A."/>
            <person name="Szafranski K."/>
            <person name="Feuermann M."/>
            <person name="Pedruzzi I."/>
            <person name="Priebe S."/>
            <person name="Groth M."/>
            <person name="Winkler R."/>
            <person name="Li W."/>
            <person name="Kniemeyer O."/>
            <person name="Schroeckh V."/>
            <person name="Hertweck C."/>
            <person name="Hube B."/>
            <person name="White T.C."/>
            <person name="Platzer M."/>
            <person name="Guthke R."/>
            <person name="Heitman J."/>
            <person name="Woestemeyer J."/>
            <person name="Zipfel P.F."/>
            <person name="Monod M."/>
            <person name="Brakhage A.A."/>
        </authorList>
    </citation>
    <scope>NUCLEOTIDE SEQUENCE [LARGE SCALE GENOMIC DNA]</scope>
    <source>
        <strain>HKI 0517</strain>
    </source>
</reference>
<evidence type="ECO:0000250" key="1"/>
<evidence type="ECO:0000255" key="2"/>
<evidence type="ECO:0000255" key="3">
    <source>
        <dbReference type="PROSITE-ProRule" id="PRU00192"/>
    </source>
</evidence>
<evidence type="ECO:0000256" key="4">
    <source>
        <dbReference type="SAM" id="MobiDB-lite"/>
    </source>
</evidence>
<evidence type="ECO:0000305" key="5"/>
<feature type="chain" id="PRO_0000410402" description="High osmolarity signaling protein SHO1">
    <location>
        <begin position="1"/>
        <end position="285"/>
    </location>
</feature>
<feature type="topological domain" description="Cytoplasmic" evidence="2">
    <location>
        <begin position="1"/>
        <end position="12"/>
    </location>
</feature>
<feature type="transmembrane region" description="Helical" evidence="2">
    <location>
        <begin position="13"/>
        <end position="33"/>
    </location>
</feature>
<feature type="topological domain" description="Extracellular" evidence="2">
    <location>
        <begin position="34"/>
        <end position="44"/>
    </location>
</feature>
<feature type="transmembrane region" description="Helical" evidence="2">
    <location>
        <begin position="45"/>
        <end position="65"/>
    </location>
</feature>
<feature type="topological domain" description="Cytoplasmic" evidence="2">
    <location>
        <begin position="66"/>
        <end position="70"/>
    </location>
</feature>
<feature type="transmembrane region" description="Helical" evidence="2">
    <location>
        <begin position="71"/>
        <end position="91"/>
    </location>
</feature>
<feature type="topological domain" description="Extracellular" evidence="2">
    <location>
        <begin position="92"/>
        <end position="103"/>
    </location>
</feature>
<feature type="transmembrane region" description="Helical" evidence="2">
    <location>
        <begin position="104"/>
        <end position="124"/>
    </location>
</feature>
<feature type="topological domain" description="Cytoplasmic" evidence="2">
    <location>
        <begin position="125"/>
        <end position="285"/>
    </location>
</feature>
<feature type="domain" description="SH3" evidence="3">
    <location>
        <begin position="226"/>
        <end position="285"/>
    </location>
</feature>
<feature type="region of interest" description="Disordered" evidence="4">
    <location>
        <begin position="141"/>
        <end position="170"/>
    </location>
</feature>
<feature type="compositionally biased region" description="Polar residues" evidence="4">
    <location>
        <begin position="147"/>
        <end position="168"/>
    </location>
</feature>
<comment type="function">
    <text evidence="1">Plasma membrane osmosensor that activates the high osmolarity glycerol (HOG) MAPK signaling pathway in response to high osmolarity.</text>
</comment>
<comment type="subunit">
    <text evidence="1">Forms homooligomers.</text>
</comment>
<comment type="subcellular location">
    <subcellularLocation>
        <location evidence="1">Cell membrane</location>
        <topology evidence="1">Multi-pass membrane protein</topology>
    </subcellularLocation>
</comment>
<comment type="similarity">
    <text evidence="5">Belongs to the SHO1 family.</text>
</comment>
<organism>
    <name type="scientific">Trichophyton verrucosum (strain HKI 0517)</name>
    <dbReference type="NCBI Taxonomy" id="663202"/>
    <lineage>
        <taxon>Eukaryota</taxon>
        <taxon>Fungi</taxon>
        <taxon>Dikarya</taxon>
        <taxon>Ascomycota</taxon>
        <taxon>Pezizomycotina</taxon>
        <taxon>Eurotiomycetes</taxon>
        <taxon>Eurotiomycetidae</taxon>
        <taxon>Onygenales</taxon>
        <taxon>Arthrodermataceae</taxon>
        <taxon>Trichophyton</taxon>
    </lineage>
</organism>
<proteinExistence type="inferred from homology"/>
<gene>
    <name type="primary">SHO1</name>
    <name type="ORF">TRV_04002</name>
</gene>
<sequence length="285" mass="30479">MARFQMSNLVGDPFALATVSIGMLAWIIGVVSCSIAHTKEVVPNFFWWSIAYQLCVLVGVAVVMGSNTSHIYGTAVVGYAAAGLVCTTFTLDSLVTSKQGARQSAGAGLILLAMTDIVWIFYFGSTSQSGPRAYIDSFAPHKEQPHSYRNSKPISHSYTPRPETTVSSAHPHMYSSAPLSGFETSSPMTGFNPAAASTTGLQPVLGSQTNASTVGGETGEVGQPTEYPYRAKAIYSYEANPDDANEISFTKHEILEVSDVSGRWWQAKKSTGETGIAPSNYLILL</sequence>
<keyword id="KW-1003">Cell membrane</keyword>
<keyword id="KW-0472">Membrane</keyword>
<keyword id="KW-0728">SH3 domain</keyword>
<keyword id="KW-0346">Stress response</keyword>
<keyword id="KW-0812">Transmembrane</keyword>
<keyword id="KW-1133">Transmembrane helix</keyword>
<protein>
    <recommendedName>
        <fullName>High osmolarity signaling protein SHO1</fullName>
    </recommendedName>
    <alternativeName>
        <fullName>Osmosensor SHO1</fullName>
    </alternativeName>
</protein>